<sequence length="294" mass="32265">MSSELLQEVPKSIEHVKHIILILSGKGGVGKSSVTTQVALTLVNKGFNVGVLDIDLTGPSLPRMFGVENKQVHQSTQGWVPVSVYNNNNNQGTDSKRGNLSLMSLGFLLGDRGNSVVWRGPKKTAMIKQFLKDVVWGSTETPLDYLLIDTPPGTSDEHIAIAEELRWANPIDGAIIVTTPQQVATADVRKEINFCKKVNFQILGIVENMSGFICPHCSECTNIFSSGGGKALSEQLNLTYLGNVPIDPQFVELVELQNEQENKKLIELYDDCELKPILNGIVDKILDKNLPSRI</sequence>
<protein>
    <recommendedName>
        <fullName evidence="1">Cytosolic Fe-S cluster assembly factor CFD1</fullName>
    </recommendedName>
    <alternativeName>
        <fullName evidence="1">Cytosolic Fe-S cluster-deficient protein 1</fullName>
    </alternativeName>
</protein>
<dbReference type="EMBL" id="CP017624">
    <property type="protein sequence ID" value="AOW27945.1"/>
    <property type="molecule type" value="Genomic_DNA"/>
</dbReference>
<dbReference type="RefSeq" id="XP_714559.1">
    <property type="nucleotide sequence ID" value="XM_709466.2"/>
</dbReference>
<dbReference type="SMR" id="Q59YD9"/>
<dbReference type="FunCoup" id="Q59YD9">
    <property type="interactions" value="165"/>
</dbReference>
<dbReference type="STRING" id="237561.Q59YD9"/>
<dbReference type="EnsemblFungi" id="C2_09670C_A-T">
    <property type="protein sequence ID" value="C2_09670C_A-T-p1"/>
    <property type="gene ID" value="C2_09670C_A"/>
</dbReference>
<dbReference type="GeneID" id="3643792"/>
<dbReference type="KEGG" id="cal:CAALFM_C209670CA"/>
<dbReference type="CGD" id="CAL0000176016">
    <property type="gene designation" value="orf19.8965"/>
</dbReference>
<dbReference type="VEuPathDB" id="FungiDB:C2_09670C_A"/>
<dbReference type="eggNOG" id="KOG3022">
    <property type="taxonomic scope" value="Eukaryota"/>
</dbReference>
<dbReference type="HOGENOM" id="CLU_024839_0_1_1"/>
<dbReference type="InParanoid" id="Q59YD9"/>
<dbReference type="OrthoDB" id="3900342at2759"/>
<dbReference type="PRO" id="PR:Q59YD9"/>
<dbReference type="Proteomes" id="UP000000559">
    <property type="component" value="Chromosome 2"/>
</dbReference>
<dbReference type="GO" id="GO:0005829">
    <property type="term" value="C:cytosol"/>
    <property type="evidence" value="ECO:0000318"/>
    <property type="project" value="GO_Central"/>
</dbReference>
<dbReference type="GO" id="GO:1904564">
    <property type="term" value="C:cytosolic [4Fe-4S] assembly scaffold complex"/>
    <property type="evidence" value="ECO:0007669"/>
    <property type="project" value="EnsemblFungi"/>
</dbReference>
<dbReference type="GO" id="GO:0051539">
    <property type="term" value="F:4 iron, 4 sulfur cluster binding"/>
    <property type="evidence" value="ECO:0007669"/>
    <property type="project" value="UniProtKB-UniRule"/>
</dbReference>
<dbReference type="GO" id="GO:0005524">
    <property type="term" value="F:ATP binding"/>
    <property type="evidence" value="ECO:0007669"/>
    <property type="project" value="UniProtKB-KW"/>
</dbReference>
<dbReference type="GO" id="GO:0016887">
    <property type="term" value="F:ATP hydrolysis activity"/>
    <property type="evidence" value="ECO:0007669"/>
    <property type="project" value="EnsemblFungi"/>
</dbReference>
<dbReference type="GO" id="GO:0140663">
    <property type="term" value="F:ATP-dependent FeS chaperone activity"/>
    <property type="evidence" value="ECO:0007669"/>
    <property type="project" value="InterPro"/>
</dbReference>
<dbReference type="GO" id="GO:0051536">
    <property type="term" value="F:iron-sulfur cluster binding"/>
    <property type="evidence" value="ECO:0000318"/>
    <property type="project" value="GO_Central"/>
</dbReference>
<dbReference type="GO" id="GO:0046872">
    <property type="term" value="F:metal ion binding"/>
    <property type="evidence" value="ECO:0007669"/>
    <property type="project" value="UniProtKB-KW"/>
</dbReference>
<dbReference type="GO" id="GO:0016226">
    <property type="term" value="P:iron-sulfur cluster assembly"/>
    <property type="evidence" value="ECO:0000318"/>
    <property type="project" value="GO_Central"/>
</dbReference>
<dbReference type="GO" id="GO:0002098">
    <property type="term" value="P:tRNA wobble uridine modification"/>
    <property type="evidence" value="ECO:0007669"/>
    <property type="project" value="EnsemblFungi"/>
</dbReference>
<dbReference type="CDD" id="cd02037">
    <property type="entry name" value="Mrp_NBP35"/>
    <property type="match status" value="1"/>
</dbReference>
<dbReference type="FunFam" id="3.40.50.300:FF:001300">
    <property type="entry name" value="Cytosolic Fe-S cluster assembly factor CFD1"/>
    <property type="match status" value="1"/>
</dbReference>
<dbReference type="Gene3D" id="3.40.50.300">
    <property type="entry name" value="P-loop containing nucleotide triphosphate hydrolases"/>
    <property type="match status" value="1"/>
</dbReference>
<dbReference type="HAMAP" id="MF_02040">
    <property type="entry name" value="Mrp_NBP35"/>
    <property type="match status" value="1"/>
</dbReference>
<dbReference type="HAMAP" id="MF_03039">
    <property type="entry name" value="NUBP2"/>
    <property type="match status" value="1"/>
</dbReference>
<dbReference type="InterPro" id="IPR019591">
    <property type="entry name" value="Mrp/NBP35_ATP-bd"/>
</dbReference>
<dbReference type="InterPro" id="IPR028600">
    <property type="entry name" value="NUBP2/Cfd1_eukaryotes"/>
</dbReference>
<dbReference type="InterPro" id="IPR027417">
    <property type="entry name" value="P-loop_NTPase"/>
</dbReference>
<dbReference type="InterPro" id="IPR033756">
    <property type="entry name" value="YlxH/NBP35"/>
</dbReference>
<dbReference type="PANTHER" id="PTHR23264:SF19">
    <property type="entry name" value="CYTOSOLIC FE-S CLUSTER ASSEMBLY FACTOR NUBP2"/>
    <property type="match status" value="1"/>
</dbReference>
<dbReference type="PANTHER" id="PTHR23264">
    <property type="entry name" value="NUCLEOTIDE-BINDING PROTEIN NBP35 YEAST -RELATED"/>
    <property type="match status" value="1"/>
</dbReference>
<dbReference type="Pfam" id="PF10609">
    <property type="entry name" value="ParA"/>
    <property type="match status" value="1"/>
</dbReference>
<dbReference type="SUPFAM" id="SSF52540">
    <property type="entry name" value="P-loop containing nucleoside triphosphate hydrolases"/>
    <property type="match status" value="1"/>
</dbReference>
<proteinExistence type="inferred from homology"/>
<keyword id="KW-0004">4Fe-4S</keyword>
<keyword id="KW-0067">ATP-binding</keyword>
<keyword id="KW-0963">Cytoplasm</keyword>
<keyword id="KW-0408">Iron</keyword>
<keyword id="KW-0411">Iron-sulfur</keyword>
<keyword id="KW-0479">Metal-binding</keyword>
<keyword id="KW-0547">Nucleotide-binding</keyword>
<keyword id="KW-1185">Reference proteome</keyword>
<comment type="function">
    <text evidence="1">Component of the cytosolic iron-sulfur (Fe/S) protein assembly (CIA) machinery. Required for maturation of extramitochondrial Fe-S proteins. The NBP35-CFD1 heterotetramer forms a Fe-S scaffold complex, mediating the de novo assembly of an Fe-S cluster and its transfer to target apoproteins. Required for biogenesis and export of both ribosomal subunits, which may reflect a role in assembly of the Fe/S clusters in RLI1, a protein which performs rRNA processing and ribosome export.</text>
</comment>
<comment type="cofactor">
    <cofactor evidence="1">
        <name>[4Fe-4S] cluster</name>
        <dbReference type="ChEBI" id="CHEBI:49883"/>
    </cofactor>
    <text evidence="1">Binds 4 [4Fe-4S] clusters per heterotetramer. Contains two stable clusters in the N-termini of NBP35 and two labile, bridging clusters between subunits of the NBP35-CFD1 heterotetramer.</text>
</comment>
<comment type="subunit">
    <text evidence="1">Heterotetramer of 2 NBP35 and 2 CFD1 chains.</text>
</comment>
<comment type="subcellular location">
    <subcellularLocation>
        <location evidence="1">Cytoplasm</location>
    </subcellularLocation>
</comment>
<comment type="similarity">
    <text evidence="1">Belongs to the Mrp/NBP35 ATP-binding proteins family. NUBP2/CFD1 subfamily.</text>
</comment>
<name>CFD1_CANAL</name>
<feature type="chain" id="PRO_0000278873" description="Cytosolic Fe-S cluster assembly factor CFD1">
    <location>
        <begin position="1"/>
        <end position="294"/>
    </location>
</feature>
<feature type="binding site" evidence="1">
    <location>
        <begin position="25"/>
        <end position="32"/>
    </location>
    <ligand>
        <name>ATP</name>
        <dbReference type="ChEBI" id="CHEBI:30616"/>
    </ligand>
</feature>
<feature type="binding site" evidence="1">
    <location>
        <position position="214"/>
    </location>
    <ligand>
        <name>[4Fe-4S] cluster</name>
        <dbReference type="ChEBI" id="CHEBI:49883"/>
        <note>ligand shared between dimeric partners</note>
    </ligand>
</feature>
<feature type="binding site" evidence="1">
    <location>
        <position position="217"/>
    </location>
    <ligand>
        <name>[4Fe-4S] cluster</name>
        <dbReference type="ChEBI" id="CHEBI:49883"/>
        <note>ligand shared between dimeric partners</note>
    </ligand>
</feature>
<accession>Q59YD9</accession>
<accession>A0A1D8PIG4</accession>
<gene>
    <name evidence="1" type="primary">CFD1</name>
    <name type="ordered locus">CAALFM_C209670CA</name>
    <name type="ORF">CaO19.1387</name>
    <name type="ORF">CaO19.8965</name>
</gene>
<organism>
    <name type="scientific">Candida albicans (strain SC5314 / ATCC MYA-2876)</name>
    <name type="common">Yeast</name>
    <dbReference type="NCBI Taxonomy" id="237561"/>
    <lineage>
        <taxon>Eukaryota</taxon>
        <taxon>Fungi</taxon>
        <taxon>Dikarya</taxon>
        <taxon>Ascomycota</taxon>
        <taxon>Saccharomycotina</taxon>
        <taxon>Pichiomycetes</taxon>
        <taxon>Debaryomycetaceae</taxon>
        <taxon>Candida/Lodderomyces clade</taxon>
        <taxon>Candida</taxon>
    </lineage>
</organism>
<evidence type="ECO:0000255" key="1">
    <source>
        <dbReference type="HAMAP-Rule" id="MF_03039"/>
    </source>
</evidence>
<reference key="1">
    <citation type="journal article" date="2004" name="Proc. Natl. Acad. Sci. U.S.A.">
        <title>The diploid genome sequence of Candida albicans.</title>
        <authorList>
            <person name="Jones T."/>
            <person name="Federspiel N.A."/>
            <person name="Chibana H."/>
            <person name="Dungan J."/>
            <person name="Kalman S."/>
            <person name="Magee B.B."/>
            <person name="Newport G."/>
            <person name="Thorstenson Y.R."/>
            <person name="Agabian N."/>
            <person name="Magee P.T."/>
            <person name="Davis R.W."/>
            <person name="Scherer S."/>
        </authorList>
    </citation>
    <scope>NUCLEOTIDE SEQUENCE [LARGE SCALE GENOMIC DNA]</scope>
    <source>
        <strain>SC5314 / ATCC MYA-2876</strain>
    </source>
</reference>
<reference key="2">
    <citation type="journal article" date="2007" name="Genome Biol.">
        <title>Assembly of the Candida albicans genome into sixteen supercontigs aligned on the eight chromosomes.</title>
        <authorList>
            <person name="van het Hoog M."/>
            <person name="Rast T.J."/>
            <person name="Martchenko M."/>
            <person name="Grindle S."/>
            <person name="Dignard D."/>
            <person name="Hogues H."/>
            <person name="Cuomo C."/>
            <person name="Berriman M."/>
            <person name="Scherer S."/>
            <person name="Magee B.B."/>
            <person name="Whiteway M."/>
            <person name="Chibana H."/>
            <person name="Nantel A."/>
            <person name="Magee P.T."/>
        </authorList>
    </citation>
    <scope>GENOME REANNOTATION</scope>
    <source>
        <strain>SC5314 / ATCC MYA-2876</strain>
    </source>
</reference>
<reference key="3">
    <citation type="journal article" date="2013" name="Genome Biol.">
        <title>Assembly of a phased diploid Candida albicans genome facilitates allele-specific measurements and provides a simple model for repeat and indel structure.</title>
        <authorList>
            <person name="Muzzey D."/>
            <person name="Schwartz K."/>
            <person name="Weissman J.S."/>
            <person name="Sherlock G."/>
        </authorList>
    </citation>
    <scope>NUCLEOTIDE SEQUENCE [LARGE SCALE GENOMIC DNA]</scope>
    <scope>GENOME REANNOTATION</scope>
    <source>
        <strain>SC5314 / ATCC MYA-2876</strain>
    </source>
</reference>